<comment type="catalytic activity">
    <reaction evidence="1">
        <text>(6S)-5,6,7,8-tetrahydrofolate + formate + ATP = (6R)-10-formyltetrahydrofolate + ADP + phosphate</text>
        <dbReference type="Rhea" id="RHEA:20221"/>
        <dbReference type="ChEBI" id="CHEBI:15740"/>
        <dbReference type="ChEBI" id="CHEBI:30616"/>
        <dbReference type="ChEBI" id="CHEBI:43474"/>
        <dbReference type="ChEBI" id="CHEBI:57453"/>
        <dbReference type="ChEBI" id="CHEBI:195366"/>
        <dbReference type="ChEBI" id="CHEBI:456216"/>
        <dbReference type="EC" id="6.3.4.3"/>
    </reaction>
</comment>
<comment type="pathway">
    <text evidence="1">One-carbon metabolism; tetrahydrofolate interconversion.</text>
</comment>
<comment type="similarity">
    <text evidence="1">Belongs to the formate--tetrahydrofolate ligase family.</text>
</comment>
<reference key="1">
    <citation type="submission" date="2006-06" db="EMBL/GenBank/DDBJ databases">
        <title>Complete sequence of Rubrobacter xylanophilus DSM 9941.</title>
        <authorList>
            <consortium name="US DOE Joint Genome Institute"/>
            <person name="Copeland A."/>
            <person name="Lucas S."/>
            <person name="Lapidus A."/>
            <person name="Barry K."/>
            <person name="Detter J.C."/>
            <person name="Glavina del Rio T."/>
            <person name="Hammon N."/>
            <person name="Israni S."/>
            <person name="Dalin E."/>
            <person name="Tice H."/>
            <person name="Pitluck S."/>
            <person name="Munk A.C."/>
            <person name="Brettin T."/>
            <person name="Bruce D."/>
            <person name="Han C."/>
            <person name="Tapia R."/>
            <person name="Gilna P."/>
            <person name="Schmutz J."/>
            <person name="Larimer F."/>
            <person name="Land M."/>
            <person name="Hauser L."/>
            <person name="Kyrpides N."/>
            <person name="Lykidis A."/>
            <person name="da Costa M.S."/>
            <person name="Rainey F.A."/>
            <person name="Empadinhas N."/>
            <person name="Jolivet E."/>
            <person name="Battista J.R."/>
            <person name="Richardson P."/>
        </authorList>
    </citation>
    <scope>NUCLEOTIDE SEQUENCE [LARGE SCALE GENOMIC DNA]</scope>
    <source>
        <strain>DSM 9941 / JCM 11954 / NBRC 16129 / PRD-1</strain>
    </source>
</reference>
<sequence length="576" mass="61554">MGEALSNLEIARGAKLLPIEEVGRSMGLREERHLEPYGRHVAKVDLCAIEDLSERPKAKYILVSAITPTPLGEGKTTTTVGLGQAFSHIGKRATIAIRQASMGPAFGIKGGAAGGGYSQVVPMERLNLHLTGDLHAVTEAHNMLAAMIDNHLYHGNGLGIEPHSISWRRVMDVNDRSLRNIVIGLGARTDGVPRQSGFDITAASEVMAILALASSLEDLRERLGRIVIGHNREGNPVSAEDVRGAGAMAVILKEAIKPNLMQTLEGTPALVHAGPFGNIATGNSSVVADLIGIRTADYLITEAGFGADMGAERFFNIKCRISGLEPDAAVVVATVRALKAHSGRYQIKAGAPLPEELLEENPQDVLAGAENLKKQIENIKLHGVPAVVAINAFPTDHPSEHKAIEEAAKEVGARCAVCRHFTEGGKGAVELARALEETIEENERERRRGGGGSFRFLYPLEMPLKQKIETIAREVYGAEGVEYDAEALRALEGFERAGFGRLPVCLAKTHLSLSSDPALKGAPRGWKLSVREVRASVGAGFIYPICGQMRTMPGLSAHPAAERIDLDGEGNVVGLF</sequence>
<accession>Q1AXZ4</accession>
<proteinExistence type="inferred from homology"/>
<feature type="chain" id="PRO_0000293054" description="Formate--tetrahydrofolate ligase 1">
    <location>
        <begin position="1"/>
        <end position="576"/>
    </location>
</feature>
<feature type="binding site" evidence="1">
    <location>
        <begin position="69"/>
        <end position="76"/>
    </location>
    <ligand>
        <name>ATP</name>
        <dbReference type="ChEBI" id="CHEBI:30616"/>
    </ligand>
</feature>
<name>FTHS1_RUBXD</name>
<dbReference type="EC" id="6.3.4.3" evidence="1"/>
<dbReference type="EMBL" id="CP000386">
    <property type="protein sequence ID" value="ABG03734.1"/>
    <property type="molecule type" value="Genomic_DNA"/>
</dbReference>
<dbReference type="RefSeq" id="WP_011563752.1">
    <property type="nucleotide sequence ID" value="NC_008148.1"/>
</dbReference>
<dbReference type="SMR" id="Q1AXZ4"/>
<dbReference type="STRING" id="266117.Rxyl_0766"/>
<dbReference type="KEGG" id="rxy:Rxyl_0766"/>
<dbReference type="eggNOG" id="COG2759">
    <property type="taxonomic scope" value="Bacteria"/>
</dbReference>
<dbReference type="HOGENOM" id="CLU_003601_3_3_11"/>
<dbReference type="OrthoDB" id="9761733at2"/>
<dbReference type="PhylomeDB" id="Q1AXZ4"/>
<dbReference type="UniPathway" id="UPA00193"/>
<dbReference type="Proteomes" id="UP000006637">
    <property type="component" value="Chromosome"/>
</dbReference>
<dbReference type="GO" id="GO:0005524">
    <property type="term" value="F:ATP binding"/>
    <property type="evidence" value="ECO:0007669"/>
    <property type="project" value="UniProtKB-UniRule"/>
</dbReference>
<dbReference type="GO" id="GO:0004329">
    <property type="term" value="F:formate-tetrahydrofolate ligase activity"/>
    <property type="evidence" value="ECO:0007669"/>
    <property type="project" value="UniProtKB-UniRule"/>
</dbReference>
<dbReference type="GO" id="GO:0035999">
    <property type="term" value="P:tetrahydrofolate interconversion"/>
    <property type="evidence" value="ECO:0007669"/>
    <property type="project" value="UniProtKB-UniRule"/>
</dbReference>
<dbReference type="CDD" id="cd00477">
    <property type="entry name" value="FTHFS"/>
    <property type="match status" value="1"/>
</dbReference>
<dbReference type="FunFam" id="3.30.1510.10:FF:000001">
    <property type="entry name" value="Formate--tetrahydrofolate ligase"/>
    <property type="match status" value="1"/>
</dbReference>
<dbReference type="FunFam" id="3.10.410.10:FF:000001">
    <property type="entry name" value="Putative formate--tetrahydrofolate ligase"/>
    <property type="match status" value="1"/>
</dbReference>
<dbReference type="Gene3D" id="3.30.1510.10">
    <property type="entry name" value="Domain 2, N(10)-formyltetrahydrofolate synthetase"/>
    <property type="match status" value="1"/>
</dbReference>
<dbReference type="Gene3D" id="3.10.410.10">
    <property type="entry name" value="Formyltetrahydrofolate synthetase, domain 3"/>
    <property type="match status" value="1"/>
</dbReference>
<dbReference type="Gene3D" id="3.40.50.300">
    <property type="entry name" value="P-loop containing nucleotide triphosphate hydrolases"/>
    <property type="match status" value="1"/>
</dbReference>
<dbReference type="HAMAP" id="MF_01543">
    <property type="entry name" value="FTHFS"/>
    <property type="match status" value="1"/>
</dbReference>
<dbReference type="InterPro" id="IPR000559">
    <property type="entry name" value="Formate_THF_ligase"/>
</dbReference>
<dbReference type="InterPro" id="IPR020628">
    <property type="entry name" value="Formate_THF_ligase_CS"/>
</dbReference>
<dbReference type="InterPro" id="IPR027417">
    <property type="entry name" value="P-loop_NTPase"/>
</dbReference>
<dbReference type="NCBIfam" id="NF010030">
    <property type="entry name" value="PRK13505.1"/>
    <property type="match status" value="1"/>
</dbReference>
<dbReference type="Pfam" id="PF01268">
    <property type="entry name" value="FTHFS"/>
    <property type="match status" value="1"/>
</dbReference>
<dbReference type="SUPFAM" id="SSF52540">
    <property type="entry name" value="P-loop containing nucleoside triphosphate hydrolases"/>
    <property type="match status" value="1"/>
</dbReference>
<dbReference type="PROSITE" id="PS00721">
    <property type="entry name" value="FTHFS_1"/>
    <property type="match status" value="1"/>
</dbReference>
<dbReference type="PROSITE" id="PS00722">
    <property type="entry name" value="FTHFS_2"/>
    <property type="match status" value="1"/>
</dbReference>
<keyword id="KW-0067">ATP-binding</keyword>
<keyword id="KW-0436">Ligase</keyword>
<keyword id="KW-0547">Nucleotide-binding</keyword>
<keyword id="KW-0554">One-carbon metabolism</keyword>
<keyword id="KW-1185">Reference proteome</keyword>
<protein>
    <recommendedName>
        <fullName evidence="1">Formate--tetrahydrofolate ligase 1</fullName>
        <ecNumber evidence="1">6.3.4.3</ecNumber>
    </recommendedName>
    <alternativeName>
        <fullName evidence="1">Formyltetrahydrofolate synthetase 1</fullName>
        <shortName evidence="1">FHS 1</shortName>
        <shortName evidence="1">FTHFS 1</shortName>
    </alternativeName>
</protein>
<organism>
    <name type="scientific">Rubrobacter xylanophilus (strain DSM 9941 / JCM 11954 / NBRC 16129 / PRD-1)</name>
    <dbReference type="NCBI Taxonomy" id="266117"/>
    <lineage>
        <taxon>Bacteria</taxon>
        <taxon>Bacillati</taxon>
        <taxon>Actinomycetota</taxon>
        <taxon>Rubrobacteria</taxon>
        <taxon>Rubrobacterales</taxon>
        <taxon>Rubrobacteraceae</taxon>
        <taxon>Rubrobacter</taxon>
    </lineage>
</organism>
<gene>
    <name evidence="1" type="primary">fhs1</name>
    <name type="ordered locus">Rxyl_0766</name>
</gene>
<evidence type="ECO:0000255" key="1">
    <source>
        <dbReference type="HAMAP-Rule" id="MF_01543"/>
    </source>
</evidence>